<proteinExistence type="evidence at transcript level"/>
<name>TAAR3_MOUSE</name>
<keyword id="KW-1003">Cell membrane</keyword>
<keyword id="KW-1015">Disulfide bond</keyword>
<keyword id="KW-0297">G-protein coupled receptor</keyword>
<keyword id="KW-0325">Glycoprotein</keyword>
<keyword id="KW-0472">Membrane</keyword>
<keyword id="KW-0675">Receptor</keyword>
<keyword id="KW-1185">Reference proteome</keyword>
<keyword id="KW-0807">Transducer</keyword>
<keyword id="KW-0812">Transmembrane</keyword>
<keyword id="KW-1133">Transmembrane helix</keyword>
<reference key="1">
    <citation type="journal article" date="2005" name="Genomics">
        <title>Trace amine-associated receptors form structurally and functionally distinct subfamilies of novel G protein-coupled receptors.</title>
        <authorList>
            <person name="Lindemann L."/>
            <person name="Ebeling M."/>
            <person name="Kratochwil N.A."/>
            <person name="Bunzow J.R."/>
            <person name="Grandy D.K."/>
            <person name="Hoener M.C."/>
        </authorList>
    </citation>
    <scope>NUCLEOTIDE SEQUENCE [GENOMIC DNA]</scope>
    <source>
        <strain>C57BL/6J</strain>
    </source>
</reference>
<reference key="2">
    <citation type="journal article" date="2004" name="Genome Res.">
        <title>The status, quality, and expansion of the NIH full-length cDNA project: the Mammalian Gene Collection (MGC).</title>
        <authorList>
            <consortium name="The MGC Project Team"/>
        </authorList>
    </citation>
    <scope>NUCLEOTIDE SEQUENCE [LARGE SCALE MRNA]</scope>
    <source>
        <tissue>Brain</tissue>
    </source>
</reference>
<reference key="3">
    <citation type="journal article" date="2006" name="Nature">
        <title>A second class of chemosensory receptors in the olfactory epithelium.</title>
        <authorList>
            <person name="Liberles S.D."/>
            <person name="Buck L.B."/>
        </authorList>
    </citation>
    <scope>FUNCTION</scope>
    <scope>TISSUE SPECIFICITY</scope>
</reference>
<reference key="4">
    <citation type="journal article" date="2012" name="ACS Chem. Biol.">
        <title>Agonists for 13 trace amine-associated receptors provide insight into the molecular basis of odor selectivity.</title>
        <authorList>
            <person name="Ferrero D.M."/>
            <person name="Wacker D."/>
            <person name="Roque M.A."/>
            <person name="Baldwin M.W."/>
            <person name="Stevens R.C."/>
            <person name="Liberles S.D."/>
        </authorList>
    </citation>
    <scope>FUNCTION</scope>
</reference>
<reference key="5">
    <citation type="journal article" date="2013" name="Nature">
        <title>Non-redundant coding of aversive odours in the main olfactory pathway.</title>
        <authorList>
            <person name="Dewan A."/>
            <person name="Pacifico R."/>
            <person name="Zhan R."/>
            <person name="Rinberg D."/>
            <person name="Bozza T."/>
        </authorList>
    </citation>
    <scope>DISRUPTION PHENOTYPE</scope>
</reference>
<reference key="6">
    <citation type="journal article" date="2018" name="Nat. Commun.">
        <title>Single olfactory receptors set odor detection thresholds.</title>
        <authorList>
            <person name="Dewan A."/>
            <person name="Cichy A."/>
            <person name="Zhang J."/>
            <person name="Miguel K."/>
            <person name="Feinstein P."/>
            <person name="Rinberg D."/>
            <person name="Bozza T."/>
        </authorList>
    </citation>
    <scope>FUNCTION</scope>
    <scope>DISRUPTION PHENOTYPE</scope>
</reference>
<evidence type="ECO:0000250" key="1">
    <source>
        <dbReference type="UniProtKB" id="Q5QD04"/>
    </source>
</evidence>
<evidence type="ECO:0000255" key="2"/>
<evidence type="ECO:0000255" key="3">
    <source>
        <dbReference type="PROSITE-ProRule" id="PRU00521"/>
    </source>
</evidence>
<evidence type="ECO:0000269" key="4">
    <source>
    </source>
</evidence>
<evidence type="ECO:0000269" key="5">
    <source>
    </source>
</evidence>
<evidence type="ECO:0000269" key="6">
    <source>
    </source>
</evidence>
<evidence type="ECO:0000269" key="7">
    <source>
    </source>
</evidence>
<evidence type="ECO:0000303" key="8">
    <source>
    </source>
</evidence>
<evidence type="ECO:0000303" key="9">
    <source>
    </source>
</evidence>
<evidence type="ECO:0000312" key="10">
    <source>
        <dbReference type="MGI" id="MGI:3527427"/>
    </source>
</evidence>
<accession>Q5QD16</accession>
<accession>B2RT86</accession>
<dbReference type="EMBL" id="AY702327">
    <property type="protein sequence ID" value="AAV70137.1"/>
    <property type="molecule type" value="Genomic_DNA"/>
</dbReference>
<dbReference type="EMBL" id="BC139171">
    <property type="protein sequence ID" value="AAI39172.1"/>
    <property type="molecule type" value="mRNA"/>
</dbReference>
<dbReference type="EMBL" id="BC139172">
    <property type="protein sequence ID" value="AAI39173.1"/>
    <property type="molecule type" value="mRNA"/>
</dbReference>
<dbReference type="CCDS" id="CCDS23736.1"/>
<dbReference type="RefSeq" id="NP_001008429.1">
    <property type="nucleotide sequence ID" value="NM_001008429.1"/>
</dbReference>
<dbReference type="SMR" id="Q5QD16"/>
<dbReference type="FunCoup" id="Q5QD16">
    <property type="interactions" value="838"/>
</dbReference>
<dbReference type="STRING" id="10090.ENSMUSP00000036817"/>
<dbReference type="GuidetoPHARMACOLOGY" id="168"/>
<dbReference type="GlyCosmos" id="Q5QD16">
    <property type="glycosylation" value="2 sites, No reported glycans"/>
</dbReference>
<dbReference type="GlyGen" id="Q5QD16">
    <property type="glycosylation" value="2 sites"/>
</dbReference>
<dbReference type="PaxDb" id="10090-ENSMUSP00000036817"/>
<dbReference type="DNASU" id="493809"/>
<dbReference type="Ensembl" id="ENSMUST00000045152.6">
    <property type="protein sequence ID" value="ENSMUSP00000036817.5"/>
    <property type="gene ID" value="ENSMUSG00000069708.4"/>
</dbReference>
<dbReference type="GeneID" id="493809"/>
<dbReference type="KEGG" id="mmu:493809"/>
<dbReference type="UCSC" id="uc007eqf.1">
    <property type="organism name" value="mouse"/>
</dbReference>
<dbReference type="AGR" id="MGI:3527427"/>
<dbReference type="CTD" id="493809"/>
<dbReference type="MGI" id="MGI:3527427">
    <property type="gene designation" value="Taar3"/>
</dbReference>
<dbReference type="VEuPathDB" id="HostDB:ENSMUSG00000069708"/>
<dbReference type="eggNOG" id="KOG3656">
    <property type="taxonomic scope" value="Eukaryota"/>
</dbReference>
<dbReference type="GeneTree" id="ENSGT00940000163260"/>
<dbReference type="HOGENOM" id="CLU_009579_11_0_1"/>
<dbReference type="InParanoid" id="Q5QD16"/>
<dbReference type="OMA" id="CALAFNK"/>
<dbReference type="OrthoDB" id="10042731at2759"/>
<dbReference type="PhylomeDB" id="Q5QD16"/>
<dbReference type="TreeFam" id="TF343107"/>
<dbReference type="Reactome" id="R-MMU-375280">
    <property type="pathway name" value="Amine ligand-binding receptors"/>
</dbReference>
<dbReference type="Reactome" id="R-MMU-418555">
    <property type="pathway name" value="G alpha (s) signalling events"/>
</dbReference>
<dbReference type="BioGRID-ORCS" id="493809">
    <property type="hits" value="2 hits in 78 CRISPR screens"/>
</dbReference>
<dbReference type="PRO" id="PR:Q5QD16"/>
<dbReference type="Proteomes" id="UP000000589">
    <property type="component" value="Chromosome 10"/>
</dbReference>
<dbReference type="RNAct" id="Q5QD16">
    <property type="molecule type" value="protein"/>
</dbReference>
<dbReference type="ExpressionAtlas" id="Q5QD16">
    <property type="expression patterns" value="differential"/>
</dbReference>
<dbReference type="GO" id="GO:0005886">
    <property type="term" value="C:plasma membrane"/>
    <property type="evidence" value="ECO:0007669"/>
    <property type="project" value="UniProtKB-SubCell"/>
</dbReference>
<dbReference type="GO" id="GO:0001594">
    <property type="term" value="F:trace-amine receptor activity"/>
    <property type="evidence" value="ECO:0000314"/>
    <property type="project" value="UniProtKB"/>
</dbReference>
<dbReference type="GO" id="GO:0007606">
    <property type="term" value="P:sensory perception of chemical stimulus"/>
    <property type="evidence" value="ECO:0000314"/>
    <property type="project" value="UniProtKB"/>
</dbReference>
<dbReference type="CDD" id="cd15312">
    <property type="entry name" value="7tmA_TAAR2_3_4"/>
    <property type="match status" value="1"/>
</dbReference>
<dbReference type="FunFam" id="1.20.1070.10:FF:000030">
    <property type="entry name" value="trace amine-associated receptor 1"/>
    <property type="match status" value="1"/>
</dbReference>
<dbReference type="Gene3D" id="1.20.1070.10">
    <property type="entry name" value="Rhodopsin 7-helix transmembrane proteins"/>
    <property type="match status" value="1"/>
</dbReference>
<dbReference type="InterPro" id="IPR000276">
    <property type="entry name" value="GPCR_Rhodpsn"/>
</dbReference>
<dbReference type="InterPro" id="IPR017452">
    <property type="entry name" value="GPCR_Rhodpsn_7TM"/>
</dbReference>
<dbReference type="InterPro" id="IPR050569">
    <property type="entry name" value="TAAR"/>
</dbReference>
<dbReference type="InterPro" id="IPR009132">
    <property type="entry name" value="TAAR_fam"/>
</dbReference>
<dbReference type="PANTHER" id="PTHR24249">
    <property type="entry name" value="HISTAMINE RECEPTOR-RELATED G-PROTEIN COUPLED RECEPTOR"/>
    <property type="match status" value="1"/>
</dbReference>
<dbReference type="PANTHER" id="PTHR24249:SF82">
    <property type="entry name" value="TRACE AMINE-ASSOCIATED RECEPTOR 3-RELATED"/>
    <property type="match status" value="1"/>
</dbReference>
<dbReference type="Pfam" id="PF00001">
    <property type="entry name" value="7tm_1"/>
    <property type="match status" value="1"/>
</dbReference>
<dbReference type="PRINTS" id="PR00237">
    <property type="entry name" value="GPCRRHODOPSN"/>
</dbReference>
<dbReference type="PRINTS" id="PR01830">
    <property type="entry name" value="TRACEAMINER"/>
</dbReference>
<dbReference type="SMART" id="SM01381">
    <property type="entry name" value="7TM_GPCR_Srsx"/>
    <property type="match status" value="1"/>
</dbReference>
<dbReference type="SUPFAM" id="SSF81321">
    <property type="entry name" value="Family A G protein-coupled receptor-like"/>
    <property type="match status" value="1"/>
</dbReference>
<dbReference type="PROSITE" id="PS00237">
    <property type="entry name" value="G_PROTEIN_RECEP_F1_1"/>
    <property type="match status" value="1"/>
</dbReference>
<dbReference type="PROSITE" id="PS50262">
    <property type="entry name" value="G_PROTEIN_RECEP_F1_2"/>
    <property type="match status" value="1"/>
</dbReference>
<gene>
    <name evidence="8 10" type="primary">Taar3</name>
</gene>
<protein>
    <recommendedName>
        <fullName evidence="8">Trace amine-associated receptor 3</fullName>
        <shortName>TaR-3</shortName>
        <shortName evidence="8">Trace amine receptor 3</shortName>
        <shortName evidence="9">mTaar3</shortName>
    </recommendedName>
</protein>
<comment type="function">
    <text evidence="4 5 7">Olfactory receptor activated by several primary trace amines, including isoamylamine (PubMed:16878137, PubMed:22545963, PubMed:30038239). Activated by isoamylamine and cyclohexylamine, but not to the corresponding alcohols, isoamylalcohol and cyclohexanol (PubMed:16878137). This receptor is probably mediated by the G(s)-class of G-proteins which activate adenylate cyclase (PubMed:16878137).</text>
</comment>
<comment type="subcellular location">
    <subcellularLocation>
        <location evidence="1">Cell membrane</location>
        <topology evidence="1">Multi-pass membrane protein</topology>
    </subcellularLocation>
</comment>
<comment type="tissue specificity">
    <text evidence="4">Specifically expressed in neurons of the olfactory epithelium.</text>
</comment>
<comment type="domain">
    <text evidence="1">In addition to the well known disulfide bond common to G-protein coupled receptor 1 family, trace amine-associated receptors (TAARs) contain an unique disulfide bond (Cys-21-Cys-185) connecting the N-terminus to the extracellular Loop 2 (ECL2), which is required for agonist-induced receptor activation.</text>
</comment>
<comment type="disruption phenotype">
    <text evidence="6 7">Mice lacking Taar3 show decreased sensitivity to isoamylamine (PubMed:30038239). Mice lacking Taar2, Taar3, Taar4, Taar5, Taar6, Taar7a, Taar7b, Taar7d, Taar7e, Taar7f, Taar8a, Taar8b, Taar8c and Taar9 show no visible phenotype or behavioral deficits (PubMed:23624375). They however show an absence of aversion to low concentrations of amines such as 2-phenylethylamine, isopentylamine, N-methylpiperidine and cadaverine (PubMed:23624375).</text>
</comment>
<comment type="similarity">
    <text evidence="3">Belongs to the G-protein coupled receptor 1 family.</text>
</comment>
<sequence>MDLIYIPEDLSSCPKFGNKSCPPTNRSFRVRMIMYLFMTGAMVITIFGNLVIIISISHFKQLHSPTNFLILSMATTDFLLGFVIMPYSMVRSVESCWYFGDSFCKFHASFDMMLSLTSIFHLCSIAIDRFYAVCDPLHYTTTMTVSMIKRLLAFCWAAPALFSFGLVLSEANVSGMQSYEILVACFNFCALTFNKFWGTILFTTCFFTPGSIMVGIYGKIFIVSRRHARALSDMPANTKGAVGKNLSKKKDRKAAKTLGIVMGVFLACWLPCFLAVLIDPYLDYSTPIIVLDLLVWLGYFNSTCNPLIHGFFYPWFRKALQFIVSGKIFRSNSDTANLFPEAH</sequence>
<feature type="chain" id="PRO_0000070150" description="Trace amine-associated receptor 3">
    <location>
        <begin position="1"/>
        <end position="343"/>
    </location>
</feature>
<feature type="topological domain" description="Extracellular" evidence="2">
    <location>
        <begin position="1"/>
        <end position="35"/>
    </location>
</feature>
<feature type="transmembrane region" description="Helical; Name=1" evidence="2">
    <location>
        <begin position="36"/>
        <end position="56"/>
    </location>
</feature>
<feature type="topological domain" description="Cytoplasmic" evidence="2">
    <location>
        <begin position="57"/>
        <end position="68"/>
    </location>
</feature>
<feature type="transmembrane region" description="Helical; Name=2" evidence="2">
    <location>
        <begin position="69"/>
        <end position="89"/>
    </location>
</feature>
<feature type="topological domain" description="Extracellular" evidence="2">
    <location>
        <begin position="90"/>
        <end position="150"/>
    </location>
</feature>
<feature type="transmembrane region" description="Helical; Name=3" evidence="2">
    <location>
        <begin position="151"/>
        <end position="168"/>
    </location>
</feature>
<feature type="topological domain" description="Cytoplasmic" evidence="2">
    <location>
        <begin position="169"/>
        <end position="172"/>
    </location>
</feature>
<feature type="transmembrane region" description="Helical; Name=4" evidence="2">
    <location>
        <begin position="173"/>
        <end position="193"/>
    </location>
</feature>
<feature type="topological domain" description="Extracellular" evidence="2">
    <location>
        <begin position="194"/>
        <end position="198"/>
    </location>
</feature>
<feature type="transmembrane region" description="Helical; Name=5" evidence="2">
    <location>
        <begin position="199"/>
        <end position="223"/>
    </location>
</feature>
<feature type="topological domain" description="Cytoplasmic" evidence="2">
    <location>
        <begin position="224"/>
        <end position="257"/>
    </location>
</feature>
<feature type="transmembrane region" description="Helical; Name=6" evidence="2">
    <location>
        <begin position="258"/>
        <end position="278"/>
    </location>
</feature>
<feature type="topological domain" description="Extracellular" evidence="2">
    <location>
        <begin position="279"/>
        <end position="287"/>
    </location>
</feature>
<feature type="transmembrane region" description="Helical; Name=7" evidence="2">
    <location>
        <begin position="288"/>
        <end position="308"/>
    </location>
</feature>
<feature type="topological domain" description="Cytoplasmic" evidence="2">
    <location>
        <begin position="309"/>
        <end position="343"/>
    </location>
</feature>
<feature type="region of interest" description="Extracellular Loop 2 (ECL2)" evidence="1">
    <location>
        <begin position="173"/>
        <end position="186"/>
    </location>
</feature>
<feature type="glycosylation site" description="N-linked (GlcNAc...) asparagine" evidence="2">
    <location>
        <position position="18"/>
    </location>
</feature>
<feature type="glycosylation site" description="N-linked (GlcNAc...) asparagine" evidence="2">
    <location>
        <position position="25"/>
    </location>
</feature>
<feature type="disulfide bond" evidence="1">
    <location>
        <begin position="21"/>
        <end position="185"/>
    </location>
</feature>
<feature type="disulfide bond" evidence="3">
    <location>
        <begin position="104"/>
        <end position="189"/>
    </location>
</feature>
<organism>
    <name type="scientific">Mus musculus</name>
    <name type="common">Mouse</name>
    <dbReference type="NCBI Taxonomy" id="10090"/>
    <lineage>
        <taxon>Eukaryota</taxon>
        <taxon>Metazoa</taxon>
        <taxon>Chordata</taxon>
        <taxon>Craniata</taxon>
        <taxon>Vertebrata</taxon>
        <taxon>Euteleostomi</taxon>
        <taxon>Mammalia</taxon>
        <taxon>Eutheria</taxon>
        <taxon>Euarchontoglires</taxon>
        <taxon>Glires</taxon>
        <taxon>Rodentia</taxon>
        <taxon>Myomorpha</taxon>
        <taxon>Muroidea</taxon>
        <taxon>Muridae</taxon>
        <taxon>Murinae</taxon>
        <taxon>Mus</taxon>
        <taxon>Mus</taxon>
    </lineage>
</organism>